<name>DCUP_XANOM</name>
<accession>Q2P6D1</accession>
<organism>
    <name type="scientific">Xanthomonas oryzae pv. oryzae (strain MAFF 311018)</name>
    <dbReference type="NCBI Taxonomy" id="342109"/>
    <lineage>
        <taxon>Bacteria</taxon>
        <taxon>Pseudomonadati</taxon>
        <taxon>Pseudomonadota</taxon>
        <taxon>Gammaproteobacteria</taxon>
        <taxon>Lysobacterales</taxon>
        <taxon>Lysobacteraceae</taxon>
        <taxon>Xanthomonas</taxon>
    </lineage>
</organism>
<feature type="chain" id="PRO_1000024000" description="Uroporphyrinogen decarboxylase">
    <location>
        <begin position="1"/>
        <end position="354"/>
    </location>
</feature>
<feature type="binding site" evidence="1">
    <location>
        <begin position="25"/>
        <end position="29"/>
    </location>
    <ligand>
        <name>substrate</name>
    </ligand>
</feature>
<feature type="binding site" evidence="1">
    <location>
        <position position="75"/>
    </location>
    <ligand>
        <name>substrate</name>
    </ligand>
</feature>
<feature type="binding site" evidence="1">
    <location>
        <position position="152"/>
    </location>
    <ligand>
        <name>substrate</name>
    </ligand>
</feature>
<feature type="binding site" evidence="1">
    <location>
        <position position="207"/>
    </location>
    <ligand>
        <name>substrate</name>
    </ligand>
</feature>
<feature type="binding site" evidence="1">
    <location>
        <position position="330"/>
    </location>
    <ligand>
        <name>substrate</name>
    </ligand>
</feature>
<feature type="site" description="Transition state stabilizer" evidence="1">
    <location>
        <position position="75"/>
    </location>
</feature>
<evidence type="ECO:0000255" key="1">
    <source>
        <dbReference type="HAMAP-Rule" id="MF_00218"/>
    </source>
</evidence>
<protein>
    <recommendedName>
        <fullName evidence="1">Uroporphyrinogen decarboxylase</fullName>
        <shortName evidence="1">UPD</shortName>
        <shortName evidence="1">URO-D</shortName>
        <ecNumber evidence="1">4.1.1.37</ecNumber>
    </recommendedName>
</protein>
<dbReference type="EC" id="4.1.1.37" evidence="1"/>
<dbReference type="EMBL" id="AP008229">
    <property type="protein sequence ID" value="BAE67896.1"/>
    <property type="molecule type" value="Genomic_DNA"/>
</dbReference>
<dbReference type="RefSeq" id="WP_011407863.1">
    <property type="nucleotide sequence ID" value="NC_007705.1"/>
</dbReference>
<dbReference type="SMR" id="Q2P6D1"/>
<dbReference type="KEGG" id="xom:XOO1141"/>
<dbReference type="HOGENOM" id="CLU_040933_0_0_6"/>
<dbReference type="UniPathway" id="UPA00251">
    <property type="reaction ID" value="UER00321"/>
</dbReference>
<dbReference type="GO" id="GO:0005829">
    <property type="term" value="C:cytosol"/>
    <property type="evidence" value="ECO:0007669"/>
    <property type="project" value="TreeGrafter"/>
</dbReference>
<dbReference type="GO" id="GO:0004853">
    <property type="term" value="F:uroporphyrinogen decarboxylase activity"/>
    <property type="evidence" value="ECO:0007669"/>
    <property type="project" value="UniProtKB-UniRule"/>
</dbReference>
<dbReference type="GO" id="GO:0019353">
    <property type="term" value="P:protoporphyrinogen IX biosynthetic process from glutamate"/>
    <property type="evidence" value="ECO:0007669"/>
    <property type="project" value="TreeGrafter"/>
</dbReference>
<dbReference type="CDD" id="cd00717">
    <property type="entry name" value="URO-D"/>
    <property type="match status" value="1"/>
</dbReference>
<dbReference type="FunFam" id="3.20.20.210:FF:000001">
    <property type="entry name" value="Uroporphyrinogen decarboxylase"/>
    <property type="match status" value="1"/>
</dbReference>
<dbReference type="Gene3D" id="3.20.20.210">
    <property type="match status" value="1"/>
</dbReference>
<dbReference type="HAMAP" id="MF_00218">
    <property type="entry name" value="URO_D"/>
    <property type="match status" value="1"/>
</dbReference>
<dbReference type="InterPro" id="IPR038071">
    <property type="entry name" value="UROD/MetE-like_sf"/>
</dbReference>
<dbReference type="InterPro" id="IPR006361">
    <property type="entry name" value="Uroporphyrinogen_deCO2ase_HemE"/>
</dbReference>
<dbReference type="InterPro" id="IPR000257">
    <property type="entry name" value="Uroporphyrinogen_deCOase"/>
</dbReference>
<dbReference type="NCBIfam" id="TIGR01464">
    <property type="entry name" value="hemE"/>
    <property type="match status" value="1"/>
</dbReference>
<dbReference type="PANTHER" id="PTHR21091">
    <property type="entry name" value="METHYLTETRAHYDROFOLATE:HOMOCYSTEINE METHYLTRANSFERASE RELATED"/>
    <property type="match status" value="1"/>
</dbReference>
<dbReference type="PANTHER" id="PTHR21091:SF169">
    <property type="entry name" value="UROPORPHYRINOGEN DECARBOXYLASE"/>
    <property type="match status" value="1"/>
</dbReference>
<dbReference type="Pfam" id="PF01208">
    <property type="entry name" value="URO-D"/>
    <property type="match status" value="1"/>
</dbReference>
<dbReference type="SUPFAM" id="SSF51726">
    <property type="entry name" value="UROD/MetE-like"/>
    <property type="match status" value="1"/>
</dbReference>
<dbReference type="PROSITE" id="PS00906">
    <property type="entry name" value="UROD_1"/>
    <property type="match status" value="1"/>
</dbReference>
<dbReference type="PROSITE" id="PS00907">
    <property type="entry name" value="UROD_2"/>
    <property type="match status" value="1"/>
</dbReference>
<sequence length="354" mass="38508">MLKNDRLLRALNRQPVDRTPVWLMRQAGRYLPEYRATRARAGSFLSMAKNPDIACEVTLQPLQRFPLDAAILFSDILTIPDAMGLELYFVEGEGPKFRHPVRDAAAIHRLGVPDMETELRYVMDAVRVIRRELDGSVPLIGFSGSPWTLACYMIEGGGSKEYARIKAMAFNAPEVLHHLLGTVTDAVIAYLAAQRAAGAQALQVFDTWGGVLSPAMYHEFSLPYLTRIAHELERGEGAERTPLVLFGKGNGVYVADLAASGAEAVGVDWTISLADAAQRAGGRVALQGNLDPATLYGSPEAIRTEVGKTLDSYAQGNGGSREGHVFNLGHGMSPDMNPEHVGVLVEAVQRLSKR</sequence>
<proteinExistence type="inferred from homology"/>
<comment type="function">
    <text evidence="1">Catalyzes the decarboxylation of four acetate groups of uroporphyrinogen-III to yield coproporphyrinogen-III.</text>
</comment>
<comment type="catalytic activity">
    <reaction evidence="1">
        <text>uroporphyrinogen III + 4 H(+) = coproporphyrinogen III + 4 CO2</text>
        <dbReference type="Rhea" id="RHEA:19865"/>
        <dbReference type="ChEBI" id="CHEBI:15378"/>
        <dbReference type="ChEBI" id="CHEBI:16526"/>
        <dbReference type="ChEBI" id="CHEBI:57308"/>
        <dbReference type="ChEBI" id="CHEBI:57309"/>
        <dbReference type="EC" id="4.1.1.37"/>
    </reaction>
</comment>
<comment type="pathway">
    <text evidence="1">Porphyrin-containing compound metabolism; protoporphyrin-IX biosynthesis; coproporphyrinogen-III from 5-aminolevulinate: step 4/4.</text>
</comment>
<comment type="subunit">
    <text evidence="1">Homodimer.</text>
</comment>
<comment type="subcellular location">
    <subcellularLocation>
        <location evidence="1">Cytoplasm</location>
    </subcellularLocation>
</comment>
<comment type="similarity">
    <text evidence="1">Belongs to the uroporphyrinogen decarboxylase family.</text>
</comment>
<reference key="1">
    <citation type="journal article" date="2005" name="Jpn. Agric. Res. Q.">
        <title>Genome sequence of Xanthomonas oryzae pv. oryzae suggests contribution of large numbers of effector genes and insertion sequences to its race diversity.</title>
        <authorList>
            <person name="Ochiai H."/>
            <person name="Inoue Y."/>
            <person name="Takeya M."/>
            <person name="Sasaki A."/>
            <person name="Kaku H."/>
        </authorList>
    </citation>
    <scope>NUCLEOTIDE SEQUENCE [LARGE SCALE GENOMIC DNA]</scope>
    <source>
        <strain>MAFF 311018</strain>
    </source>
</reference>
<keyword id="KW-0963">Cytoplasm</keyword>
<keyword id="KW-0210">Decarboxylase</keyword>
<keyword id="KW-0456">Lyase</keyword>
<keyword id="KW-0627">Porphyrin biosynthesis</keyword>
<gene>
    <name evidence="1" type="primary">hemE</name>
    <name type="ordered locus">XOO1141</name>
</gene>